<reference key="1">
    <citation type="submission" date="2008-03" db="EMBL/GenBank/DDBJ databases">
        <title>Complete sequence of Thermoproteus neutrophilus V24Sta.</title>
        <authorList>
            <consortium name="US DOE Joint Genome Institute"/>
            <person name="Copeland A."/>
            <person name="Lucas S."/>
            <person name="Lapidus A."/>
            <person name="Glavina del Rio T."/>
            <person name="Dalin E."/>
            <person name="Tice H."/>
            <person name="Bruce D."/>
            <person name="Goodwin L."/>
            <person name="Pitluck S."/>
            <person name="Sims D."/>
            <person name="Brettin T."/>
            <person name="Detter J.C."/>
            <person name="Han C."/>
            <person name="Kuske C.R."/>
            <person name="Schmutz J."/>
            <person name="Larimer F."/>
            <person name="Land M."/>
            <person name="Hauser L."/>
            <person name="Kyrpides N."/>
            <person name="Mikhailova N."/>
            <person name="Biddle J.F."/>
            <person name="Zhang Z."/>
            <person name="Fitz-Gibbon S.T."/>
            <person name="Lowe T.M."/>
            <person name="Saltikov C."/>
            <person name="House C.H."/>
            <person name="Richardson P."/>
        </authorList>
    </citation>
    <scope>NUCLEOTIDE SEQUENCE [LARGE SCALE GENOMIC DNA]</scope>
    <source>
        <strain>DSM 2338 / JCM 9278 / NBRC 100436 / V24Sta</strain>
    </source>
</reference>
<feature type="chain" id="PRO_1000123760" description="Large ribosomal subunit protein eL31">
    <location>
        <begin position="1"/>
        <end position="91"/>
    </location>
</feature>
<name>RL31_PYRNV</name>
<gene>
    <name evidence="1" type="primary">rpl31e</name>
    <name type="ordered locus">Tneu_1663</name>
</gene>
<organism>
    <name type="scientific">Pyrobaculum neutrophilum (strain DSM 2338 / JCM 9278 / NBRC 100436 / V24Sta)</name>
    <name type="common">Thermoproteus neutrophilus</name>
    <dbReference type="NCBI Taxonomy" id="444157"/>
    <lineage>
        <taxon>Archaea</taxon>
        <taxon>Thermoproteota</taxon>
        <taxon>Thermoprotei</taxon>
        <taxon>Thermoproteales</taxon>
        <taxon>Thermoproteaceae</taxon>
        <taxon>Pyrobaculum</taxon>
    </lineage>
</organism>
<keyword id="KW-0687">Ribonucleoprotein</keyword>
<keyword id="KW-0689">Ribosomal protein</keyword>
<proteinExistence type="inferred from homology"/>
<accession>B1YAD6</accession>
<comment type="similarity">
    <text evidence="1">Belongs to the eukaryotic ribosomal protein eL31 family.</text>
</comment>
<sequence length="91" mass="10556">MSEERKVVASREYVISLRRAYVVSRTKRAKYAVGLIRRFVARHLKVEPSAVKIGQKLNMELWSRGIEKPPRRVRVSVEKYSDGTALVELKE</sequence>
<protein>
    <recommendedName>
        <fullName evidence="1">Large ribosomal subunit protein eL31</fullName>
    </recommendedName>
    <alternativeName>
        <fullName evidence="2">50S ribosomal protein L31e</fullName>
    </alternativeName>
</protein>
<dbReference type="EMBL" id="CP001014">
    <property type="protein sequence ID" value="ACB40585.1"/>
    <property type="molecule type" value="Genomic_DNA"/>
</dbReference>
<dbReference type="RefSeq" id="WP_012351004.1">
    <property type="nucleotide sequence ID" value="NC_010525.1"/>
</dbReference>
<dbReference type="SMR" id="B1YAD6"/>
<dbReference type="STRING" id="444157.Tneu_1663"/>
<dbReference type="GeneID" id="6166222"/>
<dbReference type="KEGG" id="tne:Tneu_1663"/>
<dbReference type="eggNOG" id="arCOG04473">
    <property type="taxonomic scope" value="Archaea"/>
</dbReference>
<dbReference type="HOGENOM" id="CLU_112570_3_1_2"/>
<dbReference type="OrthoDB" id="10127at2157"/>
<dbReference type="Proteomes" id="UP000001694">
    <property type="component" value="Chromosome"/>
</dbReference>
<dbReference type="GO" id="GO:0022625">
    <property type="term" value="C:cytosolic large ribosomal subunit"/>
    <property type="evidence" value="ECO:0007669"/>
    <property type="project" value="TreeGrafter"/>
</dbReference>
<dbReference type="GO" id="GO:0003735">
    <property type="term" value="F:structural constituent of ribosome"/>
    <property type="evidence" value="ECO:0007669"/>
    <property type="project" value="InterPro"/>
</dbReference>
<dbReference type="GO" id="GO:0002181">
    <property type="term" value="P:cytoplasmic translation"/>
    <property type="evidence" value="ECO:0007669"/>
    <property type="project" value="TreeGrafter"/>
</dbReference>
<dbReference type="CDD" id="cd00463">
    <property type="entry name" value="Ribosomal_L31e"/>
    <property type="match status" value="1"/>
</dbReference>
<dbReference type="Gene3D" id="3.10.440.10">
    <property type="match status" value="1"/>
</dbReference>
<dbReference type="HAMAP" id="MF_00410">
    <property type="entry name" value="Ribosomal_eL31"/>
    <property type="match status" value="1"/>
</dbReference>
<dbReference type="InterPro" id="IPR000054">
    <property type="entry name" value="Ribosomal_eL31"/>
</dbReference>
<dbReference type="InterPro" id="IPR020052">
    <property type="entry name" value="Ribosomal_eL31_CS"/>
</dbReference>
<dbReference type="InterPro" id="IPR023621">
    <property type="entry name" value="Ribosomal_eL31_dom_sf"/>
</dbReference>
<dbReference type="NCBIfam" id="NF002258">
    <property type="entry name" value="PRK01192.1-1"/>
    <property type="match status" value="1"/>
</dbReference>
<dbReference type="PANTHER" id="PTHR10956">
    <property type="entry name" value="60S RIBOSOMAL PROTEIN L31"/>
    <property type="match status" value="1"/>
</dbReference>
<dbReference type="PANTHER" id="PTHR10956:SF0">
    <property type="entry name" value="60S RIBOSOMAL PROTEIN L31"/>
    <property type="match status" value="1"/>
</dbReference>
<dbReference type="Pfam" id="PF01198">
    <property type="entry name" value="Ribosomal_L31e"/>
    <property type="match status" value="1"/>
</dbReference>
<dbReference type="SMART" id="SM01380">
    <property type="entry name" value="Ribosomal_L31e"/>
    <property type="match status" value="1"/>
</dbReference>
<dbReference type="SUPFAM" id="SSF54575">
    <property type="entry name" value="Ribosomal protein L31e"/>
    <property type="match status" value="1"/>
</dbReference>
<dbReference type="PROSITE" id="PS01144">
    <property type="entry name" value="RIBOSOMAL_L31E"/>
    <property type="match status" value="1"/>
</dbReference>
<evidence type="ECO:0000255" key="1">
    <source>
        <dbReference type="HAMAP-Rule" id="MF_00410"/>
    </source>
</evidence>
<evidence type="ECO:0000305" key="2"/>